<organism>
    <name type="scientific">Corynebacterium glutamicum (strain ATCC 13032 / DSM 20300 / JCM 1318 / BCRC 11384 / CCUG 27702 / LMG 3730 / NBRC 12168 / NCIMB 10025 / NRRL B-2784 / 534)</name>
    <dbReference type="NCBI Taxonomy" id="196627"/>
    <lineage>
        <taxon>Bacteria</taxon>
        <taxon>Bacillati</taxon>
        <taxon>Actinomycetota</taxon>
        <taxon>Actinomycetes</taxon>
        <taxon>Mycobacteriales</taxon>
        <taxon>Corynebacteriaceae</taxon>
        <taxon>Corynebacterium</taxon>
    </lineage>
</organism>
<proteinExistence type="inferred from homology"/>
<accession>Q8NLL5</accession>
<accession>Q6M1T9</accession>
<feature type="chain" id="PRO_0000138543" description="Peptide methionine sulfoxide reductase MsrA">
    <location>
        <begin position="1"/>
        <end position="217"/>
    </location>
</feature>
<feature type="active site" evidence="1">
    <location>
        <position position="56"/>
    </location>
</feature>
<gene>
    <name evidence="1" type="primary">msrA</name>
    <name type="ordered locus">Cgl2926</name>
    <name type="ordered locus">cg3236</name>
</gene>
<protein>
    <recommendedName>
        <fullName evidence="1">Peptide methionine sulfoxide reductase MsrA</fullName>
        <shortName evidence="1">Protein-methionine-S-oxide reductase</shortName>
        <ecNumber evidence="1">1.8.4.11</ecNumber>
    </recommendedName>
    <alternativeName>
        <fullName evidence="1">Peptide-methionine (S)-S-oxide reductase</fullName>
        <shortName evidence="1">Peptide Met(O) reductase</shortName>
    </alternativeName>
</protein>
<name>MSRA_CORGL</name>
<comment type="function">
    <text evidence="1">Has an important function as a repair enzyme for proteins that have been inactivated by oxidation. Catalyzes the reversible oxidation-reduction of methionine sulfoxide in proteins to methionine.</text>
</comment>
<comment type="catalytic activity">
    <reaction evidence="1">
        <text>L-methionyl-[protein] + [thioredoxin]-disulfide + H2O = L-methionyl-(S)-S-oxide-[protein] + [thioredoxin]-dithiol</text>
        <dbReference type="Rhea" id="RHEA:14217"/>
        <dbReference type="Rhea" id="RHEA-COMP:10698"/>
        <dbReference type="Rhea" id="RHEA-COMP:10700"/>
        <dbReference type="Rhea" id="RHEA-COMP:12313"/>
        <dbReference type="Rhea" id="RHEA-COMP:12315"/>
        <dbReference type="ChEBI" id="CHEBI:15377"/>
        <dbReference type="ChEBI" id="CHEBI:16044"/>
        <dbReference type="ChEBI" id="CHEBI:29950"/>
        <dbReference type="ChEBI" id="CHEBI:44120"/>
        <dbReference type="ChEBI" id="CHEBI:50058"/>
        <dbReference type="EC" id="1.8.4.11"/>
    </reaction>
</comment>
<comment type="catalytic activity">
    <reaction evidence="1">
        <text>[thioredoxin]-disulfide + L-methionine + H2O = L-methionine (S)-S-oxide + [thioredoxin]-dithiol</text>
        <dbReference type="Rhea" id="RHEA:19993"/>
        <dbReference type="Rhea" id="RHEA-COMP:10698"/>
        <dbReference type="Rhea" id="RHEA-COMP:10700"/>
        <dbReference type="ChEBI" id="CHEBI:15377"/>
        <dbReference type="ChEBI" id="CHEBI:29950"/>
        <dbReference type="ChEBI" id="CHEBI:50058"/>
        <dbReference type="ChEBI" id="CHEBI:57844"/>
        <dbReference type="ChEBI" id="CHEBI:58772"/>
        <dbReference type="EC" id="1.8.4.11"/>
    </reaction>
</comment>
<comment type="similarity">
    <text evidence="1">Belongs to the MsrA Met sulfoxide reductase family.</text>
</comment>
<keyword id="KW-0560">Oxidoreductase</keyword>
<keyword id="KW-1185">Reference proteome</keyword>
<sequence length="217" mass="23931">MAWFFAPEPVMVTADEALKGGRHPVLENPAPHTVLGTPVTGPWKEGQQRIWIGLGCFWGVEQMYWQMDGVEGTSVGYAGGFTPNPTYREVCSGRTGHTEIVEVVYDPSKISLEQLVARGLEAHDPTQGFRQGNDVGTQYRSAYYTENEEDAARVKAVVDAYGETLKQHGFGEITTEIGVISPSDYFLAEDYHQQYLDKNPDGYCPHHSTGIPCGVEA</sequence>
<dbReference type="EC" id="1.8.4.11" evidence="1"/>
<dbReference type="EMBL" id="BA000036">
    <property type="protein sequence ID" value="BAC00320.1"/>
    <property type="molecule type" value="Genomic_DNA"/>
</dbReference>
<dbReference type="EMBL" id="BX927156">
    <property type="protein sequence ID" value="CAF20949.1"/>
    <property type="molecule type" value="Genomic_DNA"/>
</dbReference>
<dbReference type="RefSeq" id="NP_602113.1">
    <property type="nucleotide sequence ID" value="NC_003450.3"/>
</dbReference>
<dbReference type="RefSeq" id="WP_011015498.1">
    <property type="nucleotide sequence ID" value="NC_006958.1"/>
</dbReference>
<dbReference type="SMR" id="Q8NLL5"/>
<dbReference type="STRING" id="196627.cg3236"/>
<dbReference type="GeneID" id="1020868"/>
<dbReference type="KEGG" id="cgb:cg3236"/>
<dbReference type="KEGG" id="cgl:Cgl2926"/>
<dbReference type="PATRIC" id="fig|196627.13.peg.2852"/>
<dbReference type="eggNOG" id="COG0225">
    <property type="taxonomic scope" value="Bacteria"/>
</dbReference>
<dbReference type="HOGENOM" id="CLU_031040_10_3_11"/>
<dbReference type="OrthoDB" id="4174719at2"/>
<dbReference type="BioCyc" id="CORYNE:G18NG-12544-MONOMER"/>
<dbReference type="BRENDA" id="1.8.4.11">
    <property type="organism ID" value="960"/>
</dbReference>
<dbReference type="Proteomes" id="UP000000582">
    <property type="component" value="Chromosome"/>
</dbReference>
<dbReference type="Proteomes" id="UP000001009">
    <property type="component" value="Chromosome"/>
</dbReference>
<dbReference type="GO" id="GO:0005737">
    <property type="term" value="C:cytoplasm"/>
    <property type="evidence" value="ECO:0007669"/>
    <property type="project" value="TreeGrafter"/>
</dbReference>
<dbReference type="GO" id="GO:0036456">
    <property type="term" value="F:L-methionine-(S)-S-oxide reductase activity"/>
    <property type="evidence" value="ECO:0007669"/>
    <property type="project" value="TreeGrafter"/>
</dbReference>
<dbReference type="GO" id="GO:0008113">
    <property type="term" value="F:peptide-methionine (S)-S-oxide reductase activity"/>
    <property type="evidence" value="ECO:0007669"/>
    <property type="project" value="UniProtKB-UniRule"/>
</dbReference>
<dbReference type="GO" id="GO:0034599">
    <property type="term" value="P:cellular response to oxidative stress"/>
    <property type="evidence" value="ECO:0007669"/>
    <property type="project" value="TreeGrafter"/>
</dbReference>
<dbReference type="GO" id="GO:0036211">
    <property type="term" value="P:protein modification process"/>
    <property type="evidence" value="ECO:0007669"/>
    <property type="project" value="UniProtKB-UniRule"/>
</dbReference>
<dbReference type="Gene3D" id="3.30.1060.10">
    <property type="entry name" value="Peptide methionine sulphoxide reductase MsrA"/>
    <property type="match status" value="1"/>
</dbReference>
<dbReference type="HAMAP" id="MF_01401">
    <property type="entry name" value="MsrA"/>
    <property type="match status" value="1"/>
</dbReference>
<dbReference type="InterPro" id="IPR002569">
    <property type="entry name" value="Met_Sox_Rdtase_MsrA_dom"/>
</dbReference>
<dbReference type="InterPro" id="IPR036509">
    <property type="entry name" value="Met_Sox_Rdtase_MsrA_sf"/>
</dbReference>
<dbReference type="InterPro" id="IPR050162">
    <property type="entry name" value="MsrA_MetSO_reductase"/>
</dbReference>
<dbReference type="NCBIfam" id="TIGR00401">
    <property type="entry name" value="msrA"/>
    <property type="match status" value="1"/>
</dbReference>
<dbReference type="PANTHER" id="PTHR42799">
    <property type="entry name" value="MITOCHONDRIAL PEPTIDE METHIONINE SULFOXIDE REDUCTASE"/>
    <property type="match status" value="1"/>
</dbReference>
<dbReference type="PANTHER" id="PTHR42799:SF2">
    <property type="entry name" value="MITOCHONDRIAL PEPTIDE METHIONINE SULFOXIDE REDUCTASE"/>
    <property type="match status" value="1"/>
</dbReference>
<dbReference type="Pfam" id="PF01625">
    <property type="entry name" value="PMSR"/>
    <property type="match status" value="1"/>
</dbReference>
<dbReference type="SUPFAM" id="SSF55068">
    <property type="entry name" value="Peptide methionine sulfoxide reductase"/>
    <property type="match status" value="1"/>
</dbReference>
<evidence type="ECO:0000255" key="1">
    <source>
        <dbReference type="HAMAP-Rule" id="MF_01401"/>
    </source>
</evidence>
<reference key="1">
    <citation type="journal article" date="2003" name="Appl. Microbiol. Biotechnol.">
        <title>The Corynebacterium glutamicum genome: features and impacts on biotechnological processes.</title>
        <authorList>
            <person name="Ikeda M."/>
            <person name="Nakagawa S."/>
        </authorList>
    </citation>
    <scope>NUCLEOTIDE SEQUENCE [LARGE SCALE GENOMIC DNA]</scope>
    <source>
        <strain>ATCC 13032 / DSM 20300 / JCM 1318 / BCRC 11384 / CCUG 27702 / LMG 3730 / NBRC 12168 / NCIMB 10025 / NRRL B-2784 / 534</strain>
    </source>
</reference>
<reference key="2">
    <citation type="journal article" date="2003" name="J. Biotechnol.">
        <title>The complete Corynebacterium glutamicum ATCC 13032 genome sequence and its impact on the production of L-aspartate-derived amino acids and vitamins.</title>
        <authorList>
            <person name="Kalinowski J."/>
            <person name="Bathe B."/>
            <person name="Bartels D."/>
            <person name="Bischoff N."/>
            <person name="Bott M."/>
            <person name="Burkovski A."/>
            <person name="Dusch N."/>
            <person name="Eggeling L."/>
            <person name="Eikmanns B.J."/>
            <person name="Gaigalat L."/>
            <person name="Goesmann A."/>
            <person name="Hartmann M."/>
            <person name="Huthmacher K."/>
            <person name="Kraemer R."/>
            <person name="Linke B."/>
            <person name="McHardy A.C."/>
            <person name="Meyer F."/>
            <person name="Moeckel B."/>
            <person name="Pfefferle W."/>
            <person name="Puehler A."/>
            <person name="Rey D.A."/>
            <person name="Rueckert C."/>
            <person name="Rupp O."/>
            <person name="Sahm H."/>
            <person name="Wendisch V.F."/>
            <person name="Wiegraebe I."/>
            <person name="Tauch A."/>
        </authorList>
    </citation>
    <scope>NUCLEOTIDE SEQUENCE [LARGE SCALE GENOMIC DNA]</scope>
    <source>
        <strain>ATCC 13032 / DSM 20300 / JCM 1318 / BCRC 11384 / CCUG 27702 / LMG 3730 / NBRC 12168 / NCIMB 10025 / NRRL B-2784 / 534</strain>
    </source>
</reference>